<gene>
    <name type="primary">ARP9</name>
    <name type="ordered locus">Os04g0177600</name>
    <name type="ordered locus">LOC_Os04g09860</name>
    <name type="ORF">OsJ_013419</name>
    <name type="ORF">OSJNBa0096F01.9</name>
</gene>
<comment type="similarity">
    <text evidence="2">Belongs to the actin family. ARP8 subfamily.</text>
</comment>
<comment type="sequence caution" evidence="2">
    <conflict type="erroneous gene model prediction">
        <sequence resource="EMBL-CDS" id="CAE04100"/>
    </conflict>
</comment>
<comment type="sequence caution" evidence="2">
    <conflict type="frameshift">
        <sequence resource="EMBL" id="CM000141"/>
    </conflict>
</comment>
<evidence type="ECO:0000256" key="1">
    <source>
        <dbReference type="SAM" id="MobiDB-lite"/>
    </source>
</evidence>
<evidence type="ECO:0000305" key="2"/>
<organism>
    <name type="scientific">Oryza sativa subsp. japonica</name>
    <name type="common">Rice</name>
    <dbReference type="NCBI Taxonomy" id="39947"/>
    <lineage>
        <taxon>Eukaryota</taxon>
        <taxon>Viridiplantae</taxon>
        <taxon>Streptophyta</taxon>
        <taxon>Embryophyta</taxon>
        <taxon>Tracheophyta</taxon>
        <taxon>Spermatophyta</taxon>
        <taxon>Magnoliopsida</taxon>
        <taxon>Liliopsida</taxon>
        <taxon>Poales</taxon>
        <taxon>Poaceae</taxon>
        <taxon>BOP clade</taxon>
        <taxon>Oryzoideae</taxon>
        <taxon>Oryzeae</taxon>
        <taxon>Oryzinae</taxon>
        <taxon>Oryza</taxon>
        <taxon>Oryza sativa</taxon>
    </lineage>
</organism>
<accession>Q0JF03</accession>
<accession>A0A0N7KIL4</accession>
<accession>A3ARJ7</accession>
<accession>Q7XNG4</accession>
<feature type="chain" id="PRO_0000320540" description="Actin-related protein 9">
    <location>
        <begin position="1"/>
        <end position="586"/>
    </location>
</feature>
<feature type="region of interest" description="Disordered" evidence="1">
    <location>
        <begin position="141"/>
        <end position="169"/>
    </location>
</feature>
<feature type="sequence conflict" description="In Ref. 6; AK105285." evidence="2" ref="6">
    <original>S</original>
    <variation>L</variation>
    <location>
        <position position="284"/>
    </location>
</feature>
<protein>
    <recommendedName>
        <fullName>Actin-related protein 9</fullName>
    </recommendedName>
</protein>
<sequence>MDYLKTVVPSQLMAERGANLVVINPGSSNVRIGFASQDVPFNIPHCIARHITQQKDDTPRLSVRDKMLNCHATPSQNAERERAYDIIASLLKIPFLDEDMPSANQALPPKMGRVDALSSQQNKDDSKFTWTDVMDRSIKSSTPIVDKDADVDPLQRSTPDDTEPNSEENMYKEIIFGEDALKIPPSESYCLSHPIRRGHFNISQDYSLHQVLEDLRTIWNWILTEKLHINPRDRHLYSAILVLGETFDNREIKEMLSIVLCDLGFSTAVIHQEALAAAFGNGLSTSCVVNIGAQVTQVVCVEDGVALPHTALALPYGGDDISRCLLWVQRRHCTWPNFQTDPVNKPIDMLMLNKLKESYSQIRSGSFDAVSVVHSYEHEKSVGHQKTKLSALNVPPMGLLYPRVLVPEEYPPPPRSWFQDYDDMLEDTWQTSDSLYSSGNGGFGMWDNYPMFPTRLKKFDNIGLVEAIVSSILSTGRIELQRKLFCSIQLVGGTASTAGLAPVLEQRVLNTIPSNQPIEKAEVLQSRSYPLFVPWKGGVILGVLDIGRDAWIHREDWAKNGVHIGSGRKYRDSYFLQAQAMCYYNS</sequence>
<dbReference type="EMBL" id="AL662933">
    <property type="protein sequence ID" value="CAE04100.3"/>
    <property type="status" value="ALT_SEQ"/>
    <property type="molecule type" value="Genomic_DNA"/>
</dbReference>
<dbReference type="EMBL" id="AP008210">
    <property type="protein sequence ID" value="BAF14084.1"/>
    <property type="molecule type" value="Genomic_DNA"/>
</dbReference>
<dbReference type="EMBL" id="AP014960">
    <property type="protein sequence ID" value="BAS87945.1"/>
    <property type="molecule type" value="Genomic_DNA"/>
</dbReference>
<dbReference type="EMBL" id="CM000141">
    <property type="status" value="NOT_ANNOTATED_CDS"/>
    <property type="molecule type" value="Genomic_DNA"/>
</dbReference>
<dbReference type="EMBL" id="AK105285">
    <property type="status" value="NOT_ANNOTATED_CDS"/>
    <property type="molecule type" value="mRNA"/>
</dbReference>
<dbReference type="RefSeq" id="XP_015636662.1">
    <property type="nucleotide sequence ID" value="XM_015781176.1"/>
</dbReference>
<dbReference type="SMR" id="Q0JF03"/>
<dbReference type="FunCoup" id="Q0JF03">
    <property type="interactions" value="2539"/>
</dbReference>
<dbReference type="STRING" id="39947.Q0JF03"/>
<dbReference type="iPTMnet" id="Q0JF03"/>
<dbReference type="PaxDb" id="39947-Q0JF03"/>
<dbReference type="EnsemblPlants" id="Os04t0177600-02">
    <property type="protein sequence ID" value="Os04t0177600-02"/>
    <property type="gene ID" value="Os04g0177600"/>
</dbReference>
<dbReference type="GeneID" id="4335089"/>
<dbReference type="Gramene" id="Os04t0177600-02">
    <property type="protein sequence ID" value="Os04t0177600-02"/>
    <property type="gene ID" value="Os04g0177600"/>
</dbReference>
<dbReference type="KEGG" id="dosa:Os04g0177600"/>
<dbReference type="KEGG" id="osa:4335089"/>
<dbReference type="eggNOG" id="KOG0797">
    <property type="taxonomic scope" value="Eukaryota"/>
</dbReference>
<dbReference type="HOGENOM" id="CLU_024282_0_0_1"/>
<dbReference type="InParanoid" id="Q0JF03"/>
<dbReference type="OrthoDB" id="5572108at2759"/>
<dbReference type="Proteomes" id="UP000000763">
    <property type="component" value="Chromosome 4"/>
</dbReference>
<dbReference type="Proteomes" id="UP000007752">
    <property type="component" value="Chromosome 4"/>
</dbReference>
<dbReference type="Proteomes" id="UP000059680">
    <property type="component" value="Chromosome 4"/>
</dbReference>
<dbReference type="ExpressionAtlas" id="Q0JF03">
    <property type="expression patterns" value="baseline and differential"/>
</dbReference>
<dbReference type="GO" id="GO:0031011">
    <property type="term" value="C:Ino80 complex"/>
    <property type="evidence" value="ECO:0000318"/>
    <property type="project" value="GO_Central"/>
</dbReference>
<dbReference type="GO" id="GO:0006302">
    <property type="term" value="P:double-strand break repair"/>
    <property type="evidence" value="ECO:0000318"/>
    <property type="project" value="GO_Central"/>
</dbReference>
<dbReference type="GO" id="GO:0006355">
    <property type="term" value="P:regulation of DNA-templated transcription"/>
    <property type="evidence" value="ECO:0000318"/>
    <property type="project" value="GO_Central"/>
</dbReference>
<dbReference type="CDD" id="cd10206">
    <property type="entry name" value="ASKHA_NBD_Arp8-like"/>
    <property type="match status" value="1"/>
</dbReference>
<dbReference type="FunFam" id="3.30.420.40:FF:000286">
    <property type="entry name" value="Actin-related protein 8"/>
    <property type="match status" value="1"/>
</dbReference>
<dbReference type="FunFam" id="3.30.420.40:FF:000378">
    <property type="entry name" value="Actin-related protein 9"/>
    <property type="match status" value="1"/>
</dbReference>
<dbReference type="FunFam" id="3.30.420.40:FF:000400">
    <property type="entry name" value="Actin-related protein 9"/>
    <property type="match status" value="1"/>
</dbReference>
<dbReference type="FunFam" id="3.30.420.40:FF:000402">
    <property type="entry name" value="Actin-related protein 9"/>
    <property type="match status" value="1"/>
</dbReference>
<dbReference type="FunFam" id="3.90.640.10:FF:000044">
    <property type="entry name" value="Actin-related protein 9"/>
    <property type="match status" value="1"/>
</dbReference>
<dbReference type="Gene3D" id="3.30.420.40">
    <property type="match status" value="2"/>
</dbReference>
<dbReference type="Gene3D" id="3.90.640.10">
    <property type="entry name" value="Actin, Chain A, domain 4"/>
    <property type="match status" value="1"/>
</dbReference>
<dbReference type="InterPro" id="IPR004000">
    <property type="entry name" value="Actin"/>
</dbReference>
<dbReference type="InterPro" id="IPR043129">
    <property type="entry name" value="ATPase_NBD"/>
</dbReference>
<dbReference type="PANTHER" id="PTHR11937">
    <property type="entry name" value="ACTIN"/>
    <property type="match status" value="1"/>
</dbReference>
<dbReference type="Pfam" id="PF00022">
    <property type="entry name" value="Actin"/>
    <property type="match status" value="1"/>
</dbReference>
<dbReference type="SMART" id="SM00268">
    <property type="entry name" value="ACTIN"/>
    <property type="match status" value="1"/>
</dbReference>
<dbReference type="SUPFAM" id="SSF53067">
    <property type="entry name" value="Actin-like ATPase domain"/>
    <property type="match status" value="2"/>
</dbReference>
<proteinExistence type="evidence at transcript level"/>
<keyword id="KW-1185">Reference proteome</keyword>
<reference key="1">
    <citation type="journal article" date="2002" name="Nature">
        <title>Sequence and analysis of rice chromosome 4.</title>
        <authorList>
            <person name="Feng Q."/>
            <person name="Zhang Y."/>
            <person name="Hao P."/>
            <person name="Wang S."/>
            <person name="Fu G."/>
            <person name="Huang Y."/>
            <person name="Li Y."/>
            <person name="Zhu J."/>
            <person name="Liu Y."/>
            <person name="Hu X."/>
            <person name="Jia P."/>
            <person name="Zhang Y."/>
            <person name="Zhao Q."/>
            <person name="Ying K."/>
            <person name="Yu S."/>
            <person name="Tang Y."/>
            <person name="Weng Q."/>
            <person name="Zhang L."/>
            <person name="Lu Y."/>
            <person name="Mu J."/>
            <person name="Lu Y."/>
            <person name="Zhang L.S."/>
            <person name="Yu Z."/>
            <person name="Fan D."/>
            <person name="Liu X."/>
            <person name="Lu T."/>
            <person name="Li C."/>
            <person name="Wu Y."/>
            <person name="Sun T."/>
            <person name="Lei H."/>
            <person name="Li T."/>
            <person name="Hu H."/>
            <person name="Guan J."/>
            <person name="Wu M."/>
            <person name="Zhang R."/>
            <person name="Zhou B."/>
            <person name="Chen Z."/>
            <person name="Chen L."/>
            <person name="Jin Z."/>
            <person name="Wang R."/>
            <person name="Yin H."/>
            <person name="Cai Z."/>
            <person name="Ren S."/>
            <person name="Lv G."/>
            <person name="Gu W."/>
            <person name="Zhu G."/>
            <person name="Tu Y."/>
            <person name="Jia J."/>
            <person name="Zhang Y."/>
            <person name="Chen J."/>
            <person name="Kang H."/>
            <person name="Chen X."/>
            <person name="Shao C."/>
            <person name="Sun Y."/>
            <person name="Hu Q."/>
            <person name="Zhang X."/>
            <person name="Zhang W."/>
            <person name="Wang L."/>
            <person name="Ding C."/>
            <person name="Sheng H."/>
            <person name="Gu J."/>
            <person name="Chen S."/>
            <person name="Ni L."/>
            <person name="Zhu F."/>
            <person name="Chen W."/>
            <person name="Lan L."/>
            <person name="Lai Y."/>
            <person name="Cheng Z."/>
            <person name="Gu M."/>
            <person name="Jiang J."/>
            <person name="Li J."/>
            <person name="Hong G."/>
            <person name="Xue Y."/>
            <person name="Han B."/>
        </authorList>
    </citation>
    <scope>NUCLEOTIDE SEQUENCE [LARGE SCALE GENOMIC DNA]</scope>
    <source>
        <strain>cv. Nipponbare</strain>
    </source>
</reference>
<reference key="2">
    <citation type="journal article" date="2005" name="Nature">
        <title>The map-based sequence of the rice genome.</title>
        <authorList>
            <consortium name="International rice genome sequencing project (IRGSP)"/>
        </authorList>
    </citation>
    <scope>NUCLEOTIDE SEQUENCE [LARGE SCALE GENOMIC DNA]</scope>
    <source>
        <strain>cv. Nipponbare</strain>
    </source>
</reference>
<reference key="3">
    <citation type="journal article" date="2008" name="Nucleic Acids Res.">
        <title>The rice annotation project database (RAP-DB): 2008 update.</title>
        <authorList>
            <consortium name="The rice annotation project (RAP)"/>
        </authorList>
    </citation>
    <scope>GENOME REANNOTATION</scope>
    <source>
        <strain>cv. Nipponbare</strain>
    </source>
</reference>
<reference key="4">
    <citation type="journal article" date="2013" name="Rice">
        <title>Improvement of the Oryza sativa Nipponbare reference genome using next generation sequence and optical map data.</title>
        <authorList>
            <person name="Kawahara Y."/>
            <person name="de la Bastide M."/>
            <person name="Hamilton J.P."/>
            <person name="Kanamori H."/>
            <person name="McCombie W.R."/>
            <person name="Ouyang S."/>
            <person name="Schwartz D.C."/>
            <person name="Tanaka T."/>
            <person name="Wu J."/>
            <person name="Zhou S."/>
            <person name="Childs K.L."/>
            <person name="Davidson R.M."/>
            <person name="Lin H."/>
            <person name="Quesada-Ocampo L."/>
            <person name="Vaillancourt B."/>
            <person name="Sakai H."/>
            <person name="Lee S.S."/>
            <person name="Kim J."/>
            <person name="Numa H."/>
            <person name="Itoh T."/>
            <person name="Buell C.R."/>
            <person name="Matsumoto T."/>
        </authorList>
    </citation>
    <scope>GENOME REANNOTATION</scope>
    <source>
        <strain>cv. Nipponbare</strain>
    </source>
</reference>
<reference key="5">
    <citation type="journal article" date="2005" name="PLoS Biol.">
        <title>The genomes of Oryza sativa: a history of duplications.</title>
        <authorList>
            <person name="Yu J."/>
            <person name="Wang J."/>
            <person name="Lin W."/>
            <person name="Li S."/>
            <person name="Li H."/>
            <person name="Zhou J."/>
            <person name="Ni P."/>
            <person name="Dong W."/>
            <person name="Hu S."/>
            <person name="Zeng C."/>
            <person name="Zhang J."/>
            <person name="Zhang Y."/>
            <person name="Li R."/>
            <person name="Xu Z."/>
            <person name="Li S."/>
            <person name="Li X."/>
            <person name="Zheng H."/>
            <person name="Cong L."/>
            <person name="Lin L."/>
            <person name="Yin J."/>
            <person name="Geng J."/>
            <person name="Li G."/>
            <person name="Shi J."/>
            <person name="Liu J."/>
            <person name="Lv H."/>
            <person name="Li J."/>
            <person name="Wang J."/>
            <person name="Deng Y."/>
            <person name="Ran L."/>
            <person name="Shi X."/>
            <person name="Wang X."/>
            <person name="Wu Q."/>
            <person name="Li C."/>
            <person name="Ren X."/>
            <person name="Wang J."/>
            <person name="Wang X."/>
            <person name="Li D."/>
            <person name="Liu D."/>
            <person name="Zhang X."/>
            <person name="Ji Z."/>
            <person name="Zhao W."/>
            <person name="Sun Y."/>
            <person name="Zhang Z."/>
            <person name="Bao J."/>
            <person name="Han Y."/>
            <person name="Dong L."/>
            <person name="Ji J."/>
            <person name="Chen P."/>
            <person name="Wu S."/>
            <person name="Liu J."/>
            <person name="Xiao Y."/>
            <person name="Bu D."/>
            <person name="Tan J."/>
            <person name="Yang L."/>
            <person name="Ye C."/>
            <person name="Zhang J."/>
            <person name="Xu J."/>
            <person name="Zhou Y."/>
            <person name="Yu Y."/>
            <person name="Zhang B."/>
            <person name="Zhuang S."/>
            <person name="Wei H."/>
            <person name="Liu B."/>
            <person name="Lei M."/>
            <person name="Yu H."/>
            <person name="Li Y."/>
            <person name="Xu H."/>
            <person name="Wei S."/>
            <person name="He X."/>
            <person name="Fang L."/>
            <person name="Zhang Z."/>
            <person name="Zhang Y."/>
            <person name="Huang X."/>
            <person name="Su Z."/>
            <person name="Tong W."/>
            <person name="Li J."/>
            <person name="Tong Z."/>
            <person name="Li S."/>
            <person name="Ye J."/>
            <person name="Wang L."/>
            <person name="Fang L."/>
            <person name="Lei T."/>
            <person name="Chen C.-S."/>
            <person name="Chen H.-C."/>
            <person name="Xu Z."/>
            <person name="Li H."/>
            <person name="Huang H."/>
            <person name="Zhang F."/>
            <person name="Xu H."/>
            <person name="Li N."/>
            <person name="Zhao C."/>
            <person name="Li S."/>
            <person name="Dong L."/>
            <person name="Huang Y."/>
            <person name="Li L."/>
            <person name="Xi Y."/>
            <person name="Qi Q."/>
            <person name="Li W."/>
            <person name="Zhang B."/>
            <person name="Hu W."/>
            <person name="Zhang Y."/>
            <person name="Tian X."/>
            <person name="Jiao Y."/>
            <person name="Liang X."/>
            <person name="Jin J."/>
            <person name="Gao L."/>
            <person name="Zheng W."/>
            <person name="Hao B."/>
            <person name="Liu S.-M."/>
            <person name="Wang W."/>
            <person name="Yuan L."/>
            <person name="Cao M."/>
            <person name="McDermott J."/>
            <person name="Samudrala R."/>
            <person name="Wang J."/>
            <person name="Wong G.K.-S."/>
            <person name="Yang H."/>
        </authorList>
    </citation>
    <scope>NUCLEOTIDE SEQUENCE [LARGE SCALE GENOMIC DNA]</scope>
    <source>
        <strain>cv. Nipponbare</strain>
    </source>
</reference>
<reference key="6">
    <citation type="journal article" date="2003" name="Science">
        <title>Collection, mapping, and annotation of over 28,000 cDNA clones from japonica rice.</title>
        <authorList>
            <consortium name="The rice full-length cDNA consortium"/>
        </authorList>
    </citation>
    <scope>NUCLEOTIDE SEQUENCE [LARGE SCALE MRNA]</scope>
    <source>
        <strain>cv. Nipponbare</strain>
    </source>
</reference>
<reference key="7">
    <citation type="journal article" date="2004" name="Trends Plant Sci.">
        <title>Plant actin-related proteins.</title>
        <authorList>
            <person name="Kandasamy M.K."/>
            <person name="Deal R.B."/>
            <person name="McKinney E.C."/>
            <person name="Meagher R.B."/>
        </authorList>
    </citation>
    <scope>REVIEW</scope>
    <scope>GENE FAMILY</scope>
    <scope>NOMENCLATURE</scope>
</reference>
<name>ARP9_ORYSJ</name>